<sequence length="570" mass="66352">MDSVSNLKSTNFQNNNDPKESVEEAVLRYVGVDLKNHIKKTKKKLKKQKKRKHGSKMSHEDEDTDMDWYLKTSGSKDLRKVDDIEPNSVAVAAVAAAYNSSMREKDKRSCHKKSSNSRSERKKHRKRKSSKERKAKIKMVLDPQLTTLDDGITTTAFLPDDLIAETAFDKYVDTEKAYLAKHPSKSLEVNEDDKENNFNNNSSTLVRIYTDLEGIPNDGSYIKRTPKIPEKDVKSDDLILAPEENNGDTALLRSDIVKASVIDGAITKSIGKKFTPSEENALDQFIEEYMKIRGLDRRQMCERIWSTDGVIRDGFWANISKVLPYRTRSSIYKHIRRKYHIFEQRGKWTPEEDQELARLCLEKEGHWTEVGKLLGRMPEDCRDRWRNYMKCGSKRGSKRWSKEEEELLTTVVNEMIEEAHQYQRMKALEAANKNDRYNQMYSRGPKGKRISDNPTFKDMINWTVVSERMSGTRSRIQCRYKWNKLVTDEAARSMLSIPVSERKWLLERLKQLPKTSYSNIDWNSIATYKPGYPRTGLELRLCYEQMREKIHDFKGRSTAEIIDSLLEQIN</sequence>
<accession>Q12457</accession>
<accession>D6VS11</accession>
<evidence type="ECO:0000255" key="1">
    <source>
        <dbReference type="PROSITE-ProRule" id="PRU00133"/>
    </source>
</evidence>
<evidence type="ECO:0000255" key="2">
    <source>
        <dbReference type="PROSITE-ProRule" id="PRU00625"/>
    </source>
</evidence>
<evidence type="ECO:0000256" key="3">
    <source>
        <dbReference type="SAM" id="MobiDB-lite"/>
    </source>
</evidence>
<evidence type="ECO:0000269" key="4">
    <source>
    </source>
</evidence>
<evidence type="ECO:0000269" key="5">
    <source>
    </source>
</evidence>
<evidence type="ECO:0000269" key="6">
    <source>
    </source>
</evidence>
<evidence type="ECO:0000269" key="7">
    <source>
    </source>
</evidence>
<evidence type="ECO:0000269" key="8">
    <source>
    </source>
</evidence>
<evidence type="ECO:0000303" key="9">
    <source>
    </source>
</evidence>
<evidence type="ECO:0000303" key="10">
    <source>
    </source>
</evidence>
<evidence type="ECO:0000312" key="11">
    <source>
        <dbReference type="SGD" id="S000002433"/>
    </source>
</evidence>
<evidence type="ECO:0007744" key="12">
    <source>
    </source>
</evidence>
<proteinExistence type="evidence at protein level"/>
<feature type="chain" id="PRO_0000242620" description="RNA polymerase I termination factor">
    <location>
        <begin position="1"/>
        <end position="570"/>
    </location>
</feature>
<feature type="domain" description="Myb-like 1" evidence="1">
    <location>
        <begin position="273"/>
        <end position="339"/>
    </location>
</feature>
<feature type="domain" description="HTH myb-type" evidence="2">
    <location>
        <begin position="340"/>
        <end position="391"/>
    </location>
</feature>
<feature type="domain" description="Myb-like 2" evidence="1">
    <location>
        <begin position="392"/>
        <end position="486"/>
    </location>
</feature>
<feature type="domain" description="Myb-like 3" evidence="1">
    <location>
        <begin position="493"/>
        <end position="549"/>
    </location>
</feature>
<feature type="DNA-binding region" description="H-T-H motif" evidence="2">
    <location>
        <begin position="367"/>
        <end position="389"/>
    </location>
</feature>
<feature type="region of interest" description="Disordered" evidence="3">
    <location>
        <begin position="1"/>
        <end position="21"/>
    </location>
</feature>
<feature type="region of interest" description="Disordered" evidence="3">
    <location>
        <begin position="37"/>
        <end position="68"/>
    </location>
</feature>
<feature type="region of interest" description="Disordered" evidence="3">
    <location>
        <begin position="100"/>
        <end position="138"/>
    </location>
</feature>
<feature type="compositionally biased region" description="Polar residues" evidence="3">
    <location>
        <begin position="1"/>
        <end position="16"/>
    </location>
</feature>
<feature type="compositionally biased region" description="Basic residues" evidence="3">
    <location>
        <begin position="37"/>
        <end position="56"/>
    </location>
</feature>
<feature type="compositionally biased region" description="Basic residues" evidence="3">
    <location>
        <begin position="108"/>
        <end position="137"/>
    </location>
</feature>
<feature type="modified residue" description="Phosphothreonine" evidence="12">
    <location>
        <position position="64"/>
    </location>
</feature>
<protein>
    <recommendedName>
        <fullName evidence="10">RNA polymerase I termination factor</fullName>
    </recommendedName>
    <alternativeName>
        <fullName evidence="9">NTS1 silencing protein 1</fullName>
    </alternativeName>
</protein>
<keyword id="KW-0238">DNA-binding</keyword>
<keyword id="KW-0539">Nucleus</keyword>
<keyword id="KW-0597">Phosphoprotein</keyword>
<keyword id="KW-1185">Reference proteome</keyword>
<keyword id="KW-0677">Repeat</keyword>
<reference key="1">
    <citation type="journal article" date="1996" name="Yeast">
        <title>Sequencing and analysis of a 35.4 kb region on the right arm of chromosome IV from Saccharomyces cerevisiae reveal 23 open reading frames.</title>
        <authorList>
            <person name="Eide L.G."/>
            <person name="Sander C."/>
            <person name="Prydz H."/>
        </authorList>
    </citation>
    <scope>NUCLEOTIDE SEQUENCE [GENOMIC DNA]</scope>
</reference>
<reference key="2">
    <citation type="journal article" date="1997" name="Yeast">
        <authorList>
            <person name="Eide L.G."/>
            <person name="Sander C."/>
            <person name="Prydz H."/>
        </authorList>
    </citation>
    <scope>ERRATUM OF PUBMED:8896275</scope>
</reference>
<reference key="3">
    <citation type="journal article" date="1997" name="Nature">
        <title>The nucleotide sequence of Saccharomyces cerevisiae chromosome IV.</title>
        <authorList>
            <person name="Jacq C."/>
            <person name="Alt-Moerbe J."/>
            <person name="Andre B."/>
            <person name="Arnold W."/>
            <person name="Bahr A."/>
            <person name="Ballesta J.P.G."/>
            <person name="Bargues M."/>
            <person name="Baron L."/>
            <person name="Becker A."/>
            <person name="Biteau N."/>
            <person name="Bloecker H."/>
            <person name="Blugeon C."/>
            <person name="Boskovic J."/>
            <person name="Brandt P."/>
            <person name="Brueckner M."/>
            <person name="Buitrago M.J."/>
            <person name="Coster F."/>
            <person name="Delaveau T."/>
            <person name="del Rey F."/>
            <person name="Dujon B."/>
            <person name="Eide L.G."/>
            <person name="Garcia-Cantalejo J.M."/>
            <person name="Goffeau A."/>
            <person name="Gomez-Peris A."/>
            <person name="Granotier C."/>
            <person name="Hanemann V."/>
            <person name="Hankeln T."/>
            <person name="Hoheisel J.D."/>
            <person name="Jaeger W."/>
            <person name="Jimenez A."/>
            <person name="Jonniaux J.-L."/>
            <person name="Kraemer C."/>
            <person name="Kuester H."/>
            <person name="Laamanen P."/>
            <person name="Legros Y."/>
            <person name="Louis E.J."/>
            <person name="Moeller-Rieker S."/>
            <person name="Monnet A."/>
            <person name="Moro M."/>
            <person name="Mueller-Auer S."/>
            <person name="Nussbaumer B."/>
            <person name="Paricio N."/>
            <person name="Paulin L."/>
            <person name="Perea J."/>
            <person name="Perez-Alonso M."/>
            <person name="Perez-Ortin J.E."/>
            <person name="Pohl T.M."/>
            <person name="Prydz H."/>
            <person name="Purnelle B."/>
            <person name="Rasmussen S.W."/>
            <person name="Remacha M.A."/>
            <person name="Revuelta J.L."/>
            <person name="Rieger M."/>
            <person name="Salom D."/>
            <person name="Saluz H.P."/>
            <person name="Saiz J.E."/>
            <person name="Saren A.-M."/>
            <person name="Schaefer M."/>
            <person name="Scharfe M."/>
            <person name="Schmidt E.R."/>
            <person name="Schneider C."/>
            <person name="Scholler P."/>
            <person name="Schwarz S."/>
            <person name="Soler-Mira A."/>
            <person name="Urrestarazu L.A."/>
            <person name="Verhasselt P."/>
            <person name="Vissers S."/>
            <person name="Voet M."/>
            <person name="Volckaert G."/>
            <person name="Wagner G."/>
            <person name="Wambutt R."/>
            <person name="Wedler E."/>
            <person name="Wedler H."/>
            <person name="Woelfl S."/>
            <person name="Harris D.E."/>
            <person name="Bowman S."/>
            <person name="Brown D."/>
            <person name="Churcher C.M."/>
            <person name="Connor R."/>
            <person name="Dedman K."/>
            <person name="Gentles S."/>
            <person name="Hamlin N."/>
            <person name="Hunt S."/>
            <person name="Jones L."/>
            <person name="McDonald S."/>
            <person name="Murphy L.D."/>
            <person name="Niblett D."/>
            <person name="Odell C."/>
            <person name="Oliver K."/>
            <person name="Rajandream M.A."/>
            <person name="Richards C."/>
            <person name="Shore L."/>
            <person name="Walsh S.V."/>
            <person name="Barrell B.G."/>
            <person name="Dietrich F.S."/>
            <person name="Mulligan J.T."/>
            <person name="Allen E."/>
            <person name="Araujo R."/>
            <person name="Aviles E."/>
            <person name="Berno A."/>
            <person name="Carpenter J."/>
            <person name="Chen E."/>
            <person name="Cherry J.M."/>
            <person name="Chung E."/>
            <person name="Duncan M."/>
            <person name="Hunicke-Smith S."/>
            <person name="Hyman R.W."/>
            <person name="Komp C."/>
            <person name="Lashkari D."/>
            <person name="Lew H."/>
            <person name="Lin D."/>
            <person name="Mosedale D."/>
            <person name="Nakahara K."/>
            <person name="Namath A."/>
            <person name="Oefner P."/>
            <person name="Oh C."/>
            <person name="Petel F.X."/>
            <person name="Roberts D."/>
            <person name="Schramm S."/>
            <person name="Schroeder M."/>
            <person name="Shogren T."/>
            <person name="Shroff N."/>
            <person name="Winant A."/>
            <person name="Yelton M.A."/>
            <person name="Botstein D."/>
            <person name="Davis R.W."/>
            <person name="Johnston M."/>
            <person name="Andrews S."/>
            <person name="Brinkman R."/>
            <person name="Cooper J."/>
            <person name="Ding H."/>
            <person name="Du Z."/>
            <person name="Favello A."/>
            <person name="Fulton L."/>
            <person name="Gattung S."/>
            <person name="Greco T."/>
            <person name="Hallsworth K."/>
            <person name="Hawkins J."/>
            <person name="Hillier L.W."/>
            <person name="Jier M."/>
            <person name="Johnson D."/>
            <person name="Johnston L."/>
            <person name="Kirsten J."/>
            <person name="Kucaba T."/>
            <person name="Langston Y."/>
            <person name="Latreille P."/>
            <person name="Le T."/>
            <person name="Mardis E."/>
            <person name="Menezes S."/>
            <person name="Miller N."/>
            <person name="Nhan M."/>
            <person name="Pauley A."/>
            <person name="Peluso D."/>
            <person name="Rifkin L."/>
            <person name="Riles L."/>
            <person name="Taich A."/>
            <person name="Trevaskis E."/>
            <person name="Vignati D."/>
            <person name="Wilcox L."/>
            <person name="Wohldman P."/>
            <person name="Vaudin M."/>
            <person name="Wilson R."/>
            <person name="Waterston R."/>
            <person name="Albermann K."/>
            <person name="Hani J."/>
            <person name="Heumann K."/>
            <person name="Kleine K."/>
            <person name="Mewes H.-W."/>
            <person name="Zollner A."/>
            <person name="Zaccaria P."/>
        </authorList>
    </citation>
    <scope>NUCLEOTIDE SEQUENCE [LARGE SCALE GENOMIC DNA]</scope>
    <source>
        <strain>ATCC 204508 / S288c</strain>
    </source>
</reference>
<reference key="4">
    <citation type="journal article" date="2014" name="G3 (Bethesda)">
        <title>The reference genome sequence of Saccharomyces cerevisiae: Then and now.</title>
        <authorList>
            <person name="Engel S.R."/>
            <person name="Dietrich F.S."/>
            <person name="Fisk D.G."/>
            <person name="Binkley G."/>
            <person name="Balakrishnan R."/>
            <person name="Costanzo M.C."/>
            <person name="Dwight S.S."/>
            <person name="Hitz B.C."/>
            <person name="Karra K."/>
            <person name="Nash R.S."/>
            <person name="Weng S."/>
            <person name="Wong E.D."/>
            <person name="Lloyd P."/>
            <person name="Skrzypek M.S."/>
            <person name="Miyasato S.R."/>
            <person name="Simison M."/>
            <person name="Cherry J.M."/>
        </authorList>
    </citation>
    <scope>GENOME REANNOTATION</scope>
    <source>
        <strain>ATCC 204508 / S288c</strain>
    </source>
</reference>
<reference key="5">
    <citation type="journal article" date="2003" name="Nature">
        <title>Global analysis of protein localization in budding yeast.</title>
        <authorList>
            <person name="Huh W.-K."/>
            <person name="Falvo J.V."/>
            <person name="Gerke L.C."/>
            <person name="Carroll A.S."/>
            <person name="Howson R.W."/>
            <person name="Weissman J.S."/>
            <person name="O'Shea E.K."/>
        </authorList>
    </citation>
    <scope>SUBCELLULAR LOCATION [LARGE SCALE ANALYSIS]</scope>
</reference>
<reference key="6">
    <citation type="journal article" date="2003" name="Nature">
        <title>Global analysis of protein expression in yeast.</title>
        <authorList>
            <person name="Ghaemmaghami S."/>
            <person name="Huh W.-K."/>
            <person name="Bower K."/>
            <person name="Howson R.W."/>
            <person name="Belle A."/>
            <person name="Dephoure N."/>
            <person name="O'Shea E.K."/>
            <person name="Weissman J.S."/>
        </authorList>
    </citation>
    <scope>LEVEL OF PROTEIN EXPRESSION [LARGE SCALE ANALYSIS]</scope>
</reference>
<reference key="7">
    <citation type="journal article" date="2004" name="J. Biol. Chem.">
        <title>Binding of the replication terminator protein Fob1p to the Ter sites of yeast causes polar fork arrest.</title>
        <authorList>
            <person name="Mohanty B.K."/>
            <person name="Bastia D."/>
        </authorList>
    </citation>
    <scope>FUNCTION</scope>
    <scope>INTERACTION WITH FOB1</scope>
</reference>
<reference key="8">
    <citation type="journal article" date="2009" name="Science">
        <title>Global analysis of Cdk1 substrate phosphorylation sites provides insights into evolution.</title>
        <authorList>
            <person name="Holt L.J."/>
            <person name="Tuch B.B."/>
            <person name="Villen J."/>
            <person name="Johnson A.D."/>
            <person name="Gygi S.P."/>
            <person name="Morgan D.O."/>
        </authorList>
    </citation>
    <scope>PHOSPHORYLATION [LARGE SCALE ANALYSIS] AT THR-64</scope>
    <scope>IDENTIFICATION BY MASS SPECTROMETRY [LARGE SCALE ANALYSIS]</scope>
</reference>
<reference key="9">
    <citation type="journal article" date="2012" name="EMBO J.">
        <title>The Reb1-homologue Ydr026c/Nsi1 is required for efficient RNA polymerase I termination in yeast.</title>
        <authorList>
            <person name="Reiter A."/>
            <person name="Hamperl S."/>
            <person name="Seitz H."/>
            <person name="Merkl P."/>
            <person name="Perez-Fernandez J."/>
            <person name="Williams L."/>
            <person name="Gerber J."/>
            <person name="Nemeth A."/>
            <person name="Leger I."/>
            <person name="Gadal O."/>
            <person name="Milkereit P."/>
            <person name="Griesenbeck J."/>
            <person name="Tschochner H."/>
        </authorList>
    </citation>
    <scope>FUNCTION</scope>
</reference>
<reference key="10">
    <citation type="journal article" date="2012" name="Nucleic Acids Res.">
        <title>Nsi1 plays a significant role in the silencing of ribosomal DNA in Saccharomyces cerevisiae.</title>
        <authorList>
            <person name="Ha C.W."/>
            <person name="Sung M.K."/>
            <person name="Huh W.K."/>
        </authorList>
    </citation>
    <scope>FUNCTION</scope>
    <scope>SUBCELLULAR LOCATION</scope>
    <scope>INTERACTION WITH FOB1; NET1 AND SIR2</scope>
    <scope>DISRUPTION PHENOTYPE</scope>
</reference>
<comment type="function">
    <text evidence="6 7 8">DNA-binding protein that recognizes sequence-specific replication termini (Ter sites) within rDNA (PubMed:14576157). Binds to rDNA terminator elements and mediates efficient RNA polymerase I transcription termination (PubMed:22805593). Required for rDNA silencing at the non-transcribed spacer 1 (NTS1). Promotes the association of SIR2 with NTS1 and contributes to maintenance of rDNA stability (PubMed:22362748).</text>
</comment>
<comment type="subunit">
    <text evidence="6 7">Interacts with FOB1 (PubMed:14576157, PubMed:22362748). Interacts with the RENT complex subunits NET1 and SIR2 (PubMed:22362748).</text>
</comment>
<comment type="subcellular location">
    <subcellularLocation>
        <location evidence="4 7">Nucleus</location>
        <location evidence="4 7">Nucleolus</location>
    </subcellularLocation>
</comment>
<comment type="disruption phenotype">
    <text evidence="7">Decreases the association of SIR2 with NTS1, decreases rDNA stability and shortens replicative lifespan.</text>
</comment>
<comment type="miscellaneous">
    <text evidence="5">Present with 432 molecules/cell in log phase SD medium.</text>
</comment>
<name>NSI1_YEAST</name>
<gene>
    <name evidence="9" type="primary">NSI1</name>
    <name evidence="11" type="ordered locus">YDR026C</name>
    <name type="ORF">PZE570</name>
</gene>
<organism>
    <name type="scientific">Saccharomyces cerevisiae (strain ATCC 204508 / S288c)</name>
    <name type="common">Baker's yeast</name>
    <dbReference type="NCBI Taxonomy" id="559292"/>
    <lineage>
        <taxon>Eukaryota</taxon>
        <taxon>Fungi</taxon>
        <taxon>Dikarya</taxon>
        <taxon>Ascomycota</taxon>
        <taxon>Saccharomycotina</taxon>
        <taxon>Saccharomycetes</taxon>
        <taxon>Saccharomycetales</taxon>
        <taxon>Saccharomycetaceae</taxon>
        <taxon>Saccharomyces</taxon>
    </lineage>
</organism>
<dbReference type="EMBL" id="X95966">
    <property type="protein sequence ID" value="CAA65219.1"/>
    <property type="molecule type" value="Genomic_DNA"/>
</dbReference>
<dbReference type="EMBL" id="Z47814">
    <property type="protein sequence ID" value="CAA87805.1"/>
    <property type="molecule type" value="Genomic_DNA"/>
</dbReference>
<dbReference type="EMBL" id="Z74322">
    <property type="protein sequence ID" value="CAA98848.1"/>
    <property type="molecule type" value="Genomic_DNA"/>
</dbReference>
<dbReference type="EMBL" id="BK006938">
    <property type="protein sequence ID" value="DAA11871.1"/>
    <property type="molecule type" value="Genomic_DNA"/>
</dbReference>
<dbReference type="PIR" id="S50933">
    <property type="entry name" value="S50933"/>
</dbReference>
<dbReference type="RefSeq" id="NP_010309.3">
    <property type="nucleotide sequence ID" value="NM_001180334.3"/>
</dbReference>
<dbReference type="SMR" id="Q12457"/>
<dbReference type="BioGRID" id="32076">
    <property type="interactions" value="122"/>
</dbReference>
<dbReference type="DIP" id="DIP-1814N"/>
<dbReference type="FunCoup" id="Q12457">
    <property type="interactions" value="112"/>
</dbReference>
<dbReference type="IntAct" id="Q12457">
    <property type="interactions" value="12"/>
</dbReference>
<dbReference type="MINT" id="Q12457"/>
<dbReference type="STRING" id="4932.YDR026C"/>
<dbReference type="iPTMnet" id="Q12457"/>
<dbReference type="PaxDb" id="4932-YDR026C"/>
<dbReference type="PeptideAtlas" id="Q12457"/>
<dbReference type="EnsemblFungi" id="YDR026C_mRNA">
    <property type="protein sequence ID" value="YDR026C"/>
    <property type="gene ID" value="YDR026C"/>
</dbReference>
<dbReference type="GeneID" id="851590"/>
<dbReference type="KEGG" id="sce:YDR026C"/>
<dbReference type="AGR" id="SGD:S000002433"/>
<dbReference type="SGD" id="S000002433">
    <property type="gene designation" value="NSI1"/>
</dbReference>
<dbReference type="VEuPathDB" id="FungiDB:YDR026C"/>
<dbReference type="eggNOG" id="KOG0051">
    <property type="taxonomic scope" value="Eukaryota"/>
</dbReference>
<dbReference type="GeneTree" id="ENSGT00940000176744"/>
<dbReference type="HOGENOM" id="CLU_016706_0_0_1"/>
<dbReference type="InParanoid" id="Q12457"/>
<dbReference type="OMA" id="MCERIWS"/>
<dbReference type="OrthoDB" id="39591at2759"/>
<dbReference type="BioCyc" id="YEAST:G3O-29642-MONOMER"/>
<dbReference type="BioGRID-ORCS" id="851590">
    <property type="hits" value="1 hit in 10 CRISPR screens"/>
</dbReference>
<dbReference type="PRO" id="PR:Q12457"/>
<dbReference type="Proteomes" id="UP000002311">
    <property type="component" value="Chromosome IV"/>
</dbReference>
<dbReference type="RNAct" id="Q12457">
    <property type="molecule type" value="protein"/>
</dbReference>
<dbReference type="GO" id="GO:0005730">
    <property type="term" value="C:nucleolus"/>
    <property type="evidence" value="ECO:0000314"/>
    <property type="project" value="SGD"/>
</dbReference>
<dbReference type="GO" id="GO:0005634">
    <property type="term" value="C:nucleus"/>
    <property type="evidence" value="ECO:0000318"/>
    <property type="project" value="GO_Central"/>
</dbReference>
<dbReference type="GO" id="GO:0033553">
    <property type="term" value="C:rDNA heterochromatin"/>
    <property type="evidence" value="ECO:0000314"/>
    <property type="project" value="SGD"/>
</dbReference>
<dbReference type="GO" id="GO:0003677">
    <property type="term" value="F:DNA binding"/>
    <property type="evidence" value="ECO:0000314"/>
    <property type="project" value="SGD"/>
</dbReference>
<dbReference type="GO" id="GO:0003700">
    <property type="term" value="F:DNA-binding transcription factor activity"/>
    <property type="evidence" value="ECO:0000318"/>
    <property type="project" value="GO_Central"/>
</dbReference>
<dbReference type="GO" id="GO:0000976">
    <property type="term" value="F:transcription cis-regulatory region binding"/>
    <property type="evidence" value="ECO:0000318"/>
    <property type="project" value="GO_Central"/>
</dbReference>
<dbReference type="GO" id="GO:0000183">
    <property type="term" value="P:rDNA heterochromatin formation"/>
    <property type="evidence" value="ECO:0000315"/>
    <property type="project" value="SGD"/>
</dbReference>
<dbReference type="GO" id="GO:0006355">
    <property type="term" value="P:regulation of DNA-templated transcription"/>
    <property type="evidence" value="ECO:0000318"/>
    <property type="project" value="GO_Central"/>
</dbReference>
<dbReference type="GO" id="GO:0006363">
    <property type="term" value="P:termination of RNA polymerase I transcription"/>
    <property type="evidence" value="ECO:0000314"/>
    <property type="project" value="SGD"/>
</dbReference>
<dbReference type="CDD" id="cd00167">
    <property type="entry name" value="SANT"/>
    <property type="match status" value="3"/>
</dbReference>
<dbReference type="FunFam" id="1.10.10.60:FF:000387">
    <property type="entry name" value="Replication termination factor 1"/>
    <property type="match status" value="1"/>
</dbReference>
<dbReference type="Gene3D" id="1.10.10.60">
    <property type="entry name" value="Homeodomain-like"/>
    <property type="match status" value="2"/>
</dbReference>
<dbReference type="InterPro" id="IPR051651">
    <property type="entry name" value="DMTF1_DNA-bind_reg"/>
</dbReference>
<dbReference type="InterPro" id="IPR009057">
    <property type="entry name" value="Homeodomain-like_sf"/>
</dbReference>
<dbReference type="InterPro" id="IPR017930">
    <property type="entry name" value="Myb_dom"/>
</dbReference>
<dbReference type="InterPro" id="IPR049260">
    <property type="entry name" value="REB1_MybAD"/>
</dbReference>
<dbReference type="InterPro" id="IPR001005">
    <property type="entry name" value="SANT/Myb"/>
</dbReference>
<dbReference type="PANTHER" id="PTHR46380">
    <property type="entry name" value="CYCLIN-D-BINDING MYB-LIKE TRANSCRIPTION FACTOR 1"/>
    <property type="match status" value="1"/>
</dbReference>
<dbReference type="PANTHER" id="PTHR46380:SF2">
    <property type="entry name" value="CYCLIN-D-BINDING MYB-LIKE TRANSCRIPTION FACTOR 1"/>
    <property type="match status" value="1"/>
</dbReference>
<dbReference type="Pfam" id="PF13921">
    <property type="entry name" value="Myb_DNA-bind_6"/>
    <property type="match status" value="1"/>
</dbReference>
<dbReference type="Pfam" id="PF21559">
    <property type="entry name" value="Reb1_MybAD"/>
    <property type="match status" value="1"/>
</dbReference>
<dbReference type="SMART" id="SM00717">
    <property type="entry name" value="SANT"/>
    <property type="match status" value="4"/>
</dbReference>
<dbReference type="SUPFAM" id="SSF46689">
    <property type="entry name" value="Homeodomain-like"/>
    <property type="match status" value="1"/>
</dbReference>
<dbReference type="PROSITE" id="PS51294">
    <property type="entry name" value="HTH_MYB"/>
    <property type="match status" value="1"/>
</dbReference>
<dbReference type="PROSITE" id="PS50090">
    <property type="entry name" value="MYB_LIKE"/>
    <property type="match status" value="2"/>
</dbReference>